<gene>
    <name evidence="1" type="primary">rppH</name>
    <name evidence="1" type="synonym">nudH</name>
    <name type="ordered locus">NE1316</name>
</gene>
<sequence>MIDRNGYRANVGIILLNSQNQVFWGKRARQDSWQFPQGGIKSGETPTEAMYRELAEETGLQPVHVEILGRTREWLRYDVPACWTRRDWRKNYRGQKQIWFLLRLLGRDSDVSLETCAHPEFDAWRWNQYWVELESVVEFKRQVYRQALTELSRLLDHEAGLGNDRAYREPLEPVEKNRKKSSDTRQS</sequence>
<name>RPPH_NITEU</name>
<feature type="chain" id="PRO_0000057014" description="RNA pyrophosphohydrolase">
    <location>
        <begin position="1"/>
        <end position="187"/>
    </location>
</feature>
<feature type="domain" description="Nudix hydrolase" evidence="1">
    <location>
        <begin position="6"/>
        <end position="149"/>
    </location>
</feature>
<feature type="region of interest" description="Disordered" evidence="2">
    <location>
        <begin position="166"/>
        <end position="187"/>
    </location>
</feature>
<feature type="short sequence motif" description="Nudix box">
    <location>
        <begin position="38"/>
        <end position="59"/>
    </location>
</feature>
<keyword id="KW-0378">Hydrolase</keyword>
<keyword id="KW-1185">Reference proteome</keyword>
<comment type="function">
    <text evidence="1">Accelerates the degradation of transcripts by removing pyrophosphate from the 5'-end of triphosphorylated RNA, leading to a more labile monophosphorylated state that can stimulate subsequent ribonuclease cleavage.</text>
</comment>
<comment type="cofactor">
    <cofactor evidence="1">
        <name>a divalent metal cation</name>
        <dbReference type="ChEBI" id="CHEBI:60240"/>
    </cofactor>
</comment>
<comment type="similarity">
    <text evidence="1">Belongs to the Nudix hydrolase family. RppH subfamily.</text>
</comment>
<dbReference type="EC" id="3.6.1.-" evidence="1"/>
<dbReference type="EMBL" id="AL954747">
    <property type="protein sequence ID" value="CAD85227.1"/>
    <property type="molecule type" value="Genomic_DNA"/>
</dbReference>
<dbReference type="RefSeq" id="WP_011111894.1">
    <property type="nucleotide sequence ID" value="NC_004757.1"/>
</dbReference>
<dbReference type="SMR" id="Q82UZ9"/>
<dbReference type="STRING" id="228410.NE1316"/>
<dbReference type="GeneID" id="87104492"/>
<dbReference type="KEGG" id="neu:NE1316"/>
<dbReference type="eggNOG" id="COG0494">
    <property type="taxonomic scope" value="Bacteria"/>
</dbReference>
<dbReference type="HOGENOM" id="CLU_087195_3_1_4"/>
<dbReference type="OrthoDB" id="9816040at2"/>
<dbReference type="PhylomeDB" id="Q82UZ9"/>
<dbReference type="Proteomes" id="UP000001416">
    <property type="component" value="Chromosome"/>
</dbReference>
<dbReference type="GO" id="GO:0016462">
    <property type="term" value="F:pyrophosphatase activity"/>
    <property type="evidence" value="ECO:0007669"/>
    <property type="project" value="UniProtKB-ARBA"/>
</dbReference>
<dbReference type="CDD" id="cd03671">
    <property type="entry name" value="NUDIX_Ap4A_hydrolase_plant_like"/>
    <property type="match status" value="1"/>
</dbReference>
<dbReference type="Gene3D" id="3.90.79.10">
    <property type="entry name" value="Nucleoside Triphosphate Pyrophosphohydrolase"/>
    <property type="match status" value="1"/>
</dbReference>
<dbReference type="HAMAP" id="MF_00298">
    <property type="entry name" value="Nudix_RppH"/>
    <property type="match status" value="1"/>
</dbReference>
<dbReference type="InterPro" id="IPR020476">
    <property type="entry name" value="Nudix_hydrolase"/>
</dbReference>
<dbReference type="InterPro" id="IPR015797">
    <property type="entry name" value="NUDIX_hydrolase-like_dom_sf"/>
</dbReference>
<dbReference type="InterPro" id="IPR020084">
    <property type="entry name" value="NUDIX_hydrolase_CS"/>
</dbReference>
<dbReference type="InterPro" id="IPR000086">
    <property type="entry name" value="NUDIX_hydrolase_dom"/>
</dbReference>
<dbReference type="InterPro" id="IPR022927">
    <property type="entry name" value="RppH"/>
</dbReference>
<dbReference type="NCBIfam" id="NF001935">
    <property type="entry name" value="PRK00714.1-2"/>
    <property type="match status" value="1"/>
</dbReference>
<dbReference type="NCBIfam" id="NF001937">
    <property type="entry name" value="PRK00714.1-4"/>
    <property type="match status" value="1"/>
</dbReference>
<dbReference type="NCBIfam" id="NF001938">
    <property type="entry name" value="PRK00714.1-5"/>
    <property type="match status" value="1"/>
</dbReference>
<dbReference type="PANTHER" id="PTHR43736">
    <property type="entry name" value="ADP-RIBOSE PYROPHOSPHATASE"/>
    <property type="match status" value="1"/>
</dbReference>
<dbReference type="PANTHER" id="PTHR43736:SF1">
    <property type="entry name" value="DIHYDRONEOPTERIN TRIPHOSPHATE DIPHOSPHATASE"/>
    <property type="match status" value="1"/>
</dbReference>
<dbReference type="Pfam" id="PF00293">
    <property type="entry name" value="NUDIX"/>
    <property type="match status" value="1"/>
</dbReference>
<dbReference type="PRINTS" id="PR00502">
    <property type="entry name" value="NUDIXFAMILY"/>
</dbReference>
<dbReference type="SUPFAM" id="SSF55811">
    <property type="entry name" value="Nudix"/>
    <property type="match status" value="1"/>
</dbReference>
<dbReference type="PROSITE" id="PS51462">
    <property type="entry name" value="NUDIX"/>
    <property type="match status" value="1"/>
</dbReference>
<dbReference type="PROSITE" id="PS00893">
    <property type="entry name" value="NUDIX_BOX"/>
    <property type="match status" value="1"/>
</dbReference>
<accession>Q82UZ9</accession>
<protein>
    <recommendedName>
        <fullName evidence="1">RNA pyrophosphohydrolase</fullName>
        <ecNumber evidence="1">3.6.1.-</ecNumber>
    </recommendedName>
    <alternativeName>
        <fullName evidence="1">(Di)nucleoside polyphosphate hydrolase</fullName>
    </alternativeName>
</protein>
<proteinExistence type="inferred from homology"/>
<organism>
    <name type="scientific">Nitrosomonas europaea (strain ATCC 19718 / CIP 103999 / KCTC 2705 / NBRC 14298)</name>
    <dbReference type="NCBI Taxonomy" id="228410"/>
    <lineage>
        <taxon>Bacteria</taxon>
        <taxon>Pseudomonadati</taxon>
        <taxon>Pseudomonadota</taxon>
        <taxon>Betaproteobacteria</taxon>
        <taxon>Nitrosomonadales</taxon>
        <taxon>Nitrosomonadaceae</taxon>
        <taxon>Nitrosomonas</taxon>
    </lineage>
</organism>
<reference key="1">
    <citation type="journal article" date="2003" name="J. Bacteriol.">
        <title>Complete genome sequence of the ammonia-oxidizing bacterium and obligate chemolithoautotroph Nitrosomonas europaea.</title>
        <authorList>
            <person name="Chain P."/>
            <person name="Lamerdin J.E."/>
            <person name="Larimer F.W."/>
            <person name="Regala W."/>
            <person name="Lao V."/>
            <person name="Land M.L."/>
            <person name="Hauser L."/>
            <person name="Hooper A.B."/>
            <person name="Klotz M.G."/>
            <person name="Norton J."/>
            <person name="Sayavedra-Soto L.A."/>
            <person name="Arciero D.M."/>
            <person name="Hommes N.G."/>
            <person name="Whittaker M.M."/>
            <person name="Arp D.J."/>
        </authorList>
    </citation>
    <scope>NUCLEOTIDE SEQUENCE [LARGE SCALE GENOMIC DNA]</scope>
    <source>
        <strain>ATCC 19718 / CIP 103999 / KCTC 2705 / NBRC 14298</strain>
    </source>
</reference>
<evidence type="ECO:0000255" key="1">
    <source>
        <dbReference type="HAMAP-Rule" id="MF_00298"/>
    </source>
</evidence>
<evidence type="ECO:0000256" key="2">
    <source>
        <dbReference type="SAM" id="MobiDB-lite"/>
    </source>
</evidence>